<dbReference type="EC" id="3.6.-.-" evidence="1"/>
<dbReference type="EMBL" id="BX897699">
    <property type="protein sequence ID" value="CAF28430.1"/>
    <property type="molecule type" value="Genomic_DNA"/>
</dbReference>
<dbReference type="RefSeq" id="WP_011181429.1">
    <property type="nucleotide sequence ID" value="NZ_LRIJ02000001.1"/>
</dbReference>
<dbReference type="SMR" id="Q6G1K8"/>
<dbReference type="PaxDb" id="283166-BH16690"/>
<dbReference type="EnsemblBacteria" id="CAF28430">
    <property type="protein sequence ID" value="CAF28430"/>
    <property type="gene ID" value="BH16690"/>
</dbReference>
<dbReference type="GeneID" id="92986288"/>
<dbReference type="KEGG" id="bhe:BH16690"/>
<dbReference type="eggNOG" id="COG0486">
    <property type="taxonomic scope" value="Bacteria"/>
</dbReference>
<dbReference type="OrthoDB" id="9805918at2"/>
<dbReference type="Proteomes" id="UP000000421">
    <property type="component" value="Chromosome"/>
</dbReference>
<dbReference type="GO" id="GO:0005737">
    <property type="term" value="C:cytoplasm"/>
    <property type="evidence" value="ECO:0007669"/>
    <property type="project" value="UniProtKB-SubCell"/>
</dbReference>
<dbReference type="GO" id="GO:0005525">
    <property type="term" value="F:GTP binding"/>
    <property type="evidence" value="ECO:0007669"/>
    <property type="project" value="UniProtKB-UniRule"/>
</dbReference>
<dbReference type="GO" id="GO:0003924">
    <property type="term" value="F:GTPase activity"/>
    <property type="evidence" value="ECO:0007669"/>
    <property type="project" value="UniProtKB-UniRule"/>
</dbReference>
<dbReference type="GO" id="GO:0046872">
    <property type="term" value="F:metal ion binding"/>
    <property type="evidence" value="ECO:0007669"/>
    <property type="project" value="UniProtKB-KW"/>
</dbReference>
<dbReference type="GO" id="GO:0030488">
    <property type="term" value="P:tRNA methylation"/>
    <property type="evidence" value="ECO:0007669"/>
    <property type="project" value="TreeGrafter"/>
</dbReference>
<dbReference type="GO" id="GO:0002098">
    <property type="term" value="P:tRNA wobble uridine modification"/>
    <property type="evidence" value="ECO:0007669"/>
    <property type="project" value="TreeGrafter"/>
</dbReference>
<dbReference type="CDD" id="cd04164">
    <property type="entry name" value="trmE"/>
    <property type="match status" value="1"/>
</dbReference>
<dbReference type="CDD" id="cd14858">
    <property type="entry name" value="TrmE_N"/>
    <property type="match status" value="1"/>
</dbReference>
<dbReference type="FunFam" id="3.30.1360.120:FF:000007">
    <property type="entry name" value="tRNA modification GTPase GTPBP3, mitochondrial"/>
    <property type="match status" value="1"/>
</dbReference>
<dbReference type="Gene3D" id="3.40.50.300">
    <property type="entry name" value="P-loop containing nucleotide triphosphate hydrolases"/>
    <property type="match status" value="1"/>
</dbReference>
<dbReference type="Gene3D" id="3.30.1360.120">
    <property type="entry name" value="Probable tRNA modification gtpase trme, domain 1"/>
    <property type="match status" value="1"/>
</dbReference>
<dbReference type="Gene3D" id="1.20.120.430">
    <property type="entry name" value="tRNA modification GTPase MnmE domain 2"/>
    <property type="match status" value="1"/>
</dbReference>
<dbReference type="HAMAP" id="MF_00379">
    <property type="entry name" value="GTPase_MnmE"/>
    <property type="match status" value="1"/>
</dbReference>
<dbReference type="InterPro" id="IPR031168">
    <property type="entry name" value="G_TrmE"/>
</dbReference>
<dbReference type="InterPro" id="IPR006073">
    <property type="entry name" value="GTP-bd"/>
</dbReference>
<dbReference type="InterPro" id="IPR018948">
    <property type="entry name" value="GTP-bd_TrmE_N"/>
</dbReference>
<dbReference type="InterPro" id="IPR004520">
    <property type="entry name" value="GTPase_MnmE"/>
</dbReference>
<dbReference type="InterPro" id="IPR027368">
    <property type="entry name" value="MnmE_dom2"/>
</dbReference>
<dbReference type="InterPro" id="IPR025867">
    <property type="entry name" value="MnmE_helical"/>
</dbReference>
<dbReference type="InterPro" id="IPR027417">
    <property type="entry name" value="P-loop_NTPase"/>
</dbReference>
<dbReference type="InterPro" id="IPR005225">
    <property type="entry name" value="Small_GTP-bd"/>
</dbReference>
<dbReference type="InterPro" id="IPR027266">
    <property type="entry name" value="TrmE/GcvT_dom1"/>
</dbReference>
<dbReference type="NCBIfam" id="TIGR00450">
    <property type="entry name" value="mnmE_trmE_thdF"/>
    <property type="match status" value="1"/>
</dbReference>
<dbReference type="NCBIfam" id="NF003661">
    <property type="entry name" value="PRK05291.1-3"/>
    <property type="match status" value="1"/>
</dbReference>
<dbReference type="NCBIfam" id="TIGR00231">
    <property type="entry name" value="small_GTP"/>
    <property type="match status" value="1"/>
</dbReference>
<dbReference type="PANTHER" id="PTHR42714">
    <property type="entry name" value="TRNA MODIFICATION GTPASE GTPBP3"/>
    <property type="match status" value="1"/>
</dbReference>
<dbReference type="PANTHER" id="PTHR42714:SF2">
    <property type="entry name" value="TRNA MODIFICATION GTPASE GTPBP3, MITOCHONDRIAL"/>
    <property type="match status" value="1"/>
</dbReference>
<dbReference type="Pfam" id="PF01926">
    <property type="entry name" value="MMR_HSR1"/>
    <property type="match status" value="1"/>
</dbReference>
<dbReference type="Pfam" id="PF12631">
    <property type="entry name" value="MnmE_helical"/>
    <property type="match status" value="1"/>
</dbReference>
<dbReference type="Pfam" id="PF10396">
    <property type="entry name" value="TrmE_N"/>
    <property type="match status" value="1"/>
</dbReference>
<dbReference type="SUPFAM" id="SSF52540">
    <property type="entry name" value="P-loop containing nucleoside triphosphate hydrolases"/>
    <property type="match status" value="1"/>
</dbReference>
<dbReference type="SUPFAM" id="SSF116878">
    <property type="entry name" value="TrmE connector domain"/>
    <property type="match status" value="1"/>
</dbReference>
<dbReference type="PROSITE" id="PS51709">
    <property type="entry name" value="G_TRME"/>
    <property type="match status" value="1"/>
</dbReference>
<gene>
    <name evidence="1" type="primary">mnmE</name>
    <name evidence="1" type="synonym">trmE</name>
    <name type="ordered locus">BH16690</name>
</gene>
<comment type="function">
    <text evidence="1">Exhibits a very high intrinsic GTPase hydrolysis rate. Involved in the addition of a carboxymethylaminomethyl (cmnm) group at the wobble position (U34) of certain tRNAs, forming tRNA-cmnm(5)s(2)U34.</text>
</comment>
<comment type="cofactor">
    <cofactor evidence="1">
        <name>K(+)</name>
        <dbReference type="ChEBI" id="CHEBI:29103"/>
    </cofactor>
    <text evidence="1">Binds 1 potassium ion per subunit.</text>
</comment>
<comment type="subunit">
    <text evidence="1">Homodimer. Heterotetramer of two MnmE and two MnmG subunits.</text>
</comment>
<comment type="subcellular location">
    <subcellularLocation>
        <location evidence="1">Cytoplasm</location>
    </subcellularLocation>
</comment>
<comment type="similarity">
    <text evidence="1">Belongs to the TRAFAC class TrmE-Era-EngA-EngB-Septin-like GTPase superfamily. TrmE GTPase family.</text>
</comment>
<reference key="1">
    <citation type="journal article" date="2004" name="Proc. Natl. Acad. Sci. U.S.A.">
        <title>The louse-borne human pathogen Bartonella quintana is a genomic derivative of the zoonotic agent Bartonella henselae.</title>
        <authorList>
            <person name="Alsmark U.C.M."/>
            <person name="Frank A.C."/>
            <person name="Karlberg E.O."/>
            <person name="Legault B.-A."/>
            <person name="Ardell D.H."/>
            <person name="Canbaeck B."/>
            <person name="Eriksson A.-S."/>
            <person name="Naeslund A.K."/>
            <person name="Handley S.A."/>
            <person name="Huvet M."/>
            <person name="La Scola B."/>
            <person name="Holmberg M."/>
            <person name="Andersson S.G.E."/>
        </authorList>
    </citation>
    <scope>NUCLEOTIDE SEQUENCE [LARGE SCALE GENOMIC DNA]</scope>
    <source>
        <strain>ATCC 49882 / DSM 28221 / CCUG 30454 / Houston 1</strain>
    </source>
</reference>
<feature type="chain" id="PRO_0000345717" description="tRNA modification GTPase MnmE">
    <location>
        <begin position="1"/>
        <end position="435"/>
    </location>
</feature>
<feature type="domain" description="TrmE-type G">
    <location>
        <begin position="214"/>
        <end position="359"/>
    </location>
</feature>
<feature type="binding site" evidence="1">
    <location>
        <position position="20"/>
    </location>
    <ligand>
        <name>(6S)-5-formyl-5,6,7,8-tetrahydrofolate</name>
        <dbReference type="ChEBI" id="CHEBI:57457"/>
    </ligand>
</feature>
<feature type="binding site" evidence="1">
    <location>
        <position position="77"/>
    </location>
    <ligand>
        <name>(6S)-5-formyl-5,6,7,8-tetrahydrofolate</name>
        <dbReference type="ChEBI" id="CHEBI:57457"/>
    </ligand>
</feature>
<feature type="binding site" evidence="1">
    <location>
        <position position="117"/>
    </location>
    <ligand>
        <name>(6S)-5-formyl-5,6,7,8-tetrahydrofolate</name>
        <dbReference type="ChEBI" id="CHEBI:57457"/>
    </ligand>
</feature>
<feature type="binding site" evidence="1">
    <location>
        <begin position="224"/>
        <end position="229"/>
    </location>
    <ligand>
        <name>GTP</name>
        <dbReference type="ChEBI" id="CHEBI:37565"/>
    </ligand>
</feature>
<feature type="binding site" evidence="1">
    <location>
        <position position="228"/>
    </location>
    <ligand>
        <name>Mg(2+)</name>
        <dbReference type="ChEBI" id="CHEBI:18420"/>
    </ligand>
</feature>
<feature type="binding site" evidence="1">
    <location>
        <begin position="243"/>
        <end position="249"/>
    </location>
    <ligand>
        <name>GTP</name>
        <dbReference type="ChEBI" id="CHEBI:37565"/>
    </ligand>
</feature>
<feature type="binding site" evidence="1">
    <location>
        <position position="249"/>
    </location>
    <ligand>
        <name>Mg(2+)</name>
        <dbReference type="ChEBI" id="CHEBI:18420"/>
    </ligand>
</feature>
<feature type="binding site" evidence="1">
    <location>
        <begin position="268"/>
        <end position="271"/>
    </location>
    <ligand>
        <name>GTP</name>
        <dbReference type="ChEBI" id="CHEBI:37565"/>
    </ligand>
</feature>
<feature type="binding site" evidence="1">
    <location>
        <position position="435"/>
    </location>
    <ligand>
        <name>(6S)-5-formyl-5,6,7,8-tetrahydrofolate</name>
        <dbReference type="ChEBI" id="CHEBI:57457"/>
    </ligand>
</feature>
<proteinExistence type="inferred from homology"/>
<name>MNME_BARHE</name>
<protein>
    <recommendedName>
        <fullName evidence="1">tRNA modification GTPase MnmE</fullName>
        <ecNumber evidence="1">3.6.-.-</ecNumber>
    </recommendedName>
</protein>
<evidence type="ECO:0000255" key="1">
    <source>
        <dbReference type="HAMAP-Rule" id="MF_00379"/>
    </source>
</evidence>
<organism>
    <name type="scientific">Bartonella henselae (strain ATCC 49882 / DSM 28221 / CCUG 30454 / Houston 1)</name>
    <name type="common">Rochalimaea henselae</name>
    <dbReference type="NCBI Taxonomy" id="283166"/>
    <lineage>
        <taxon>Bacteria</taxon>
        <taxon>Pseudomonadati</taxon>
        <taxon>Pseudomonadota</taxon>
        <taxon>Alphaproteobacteria</taxon>
        <taxon>Hyphomicrobiales</taxon>
        <taxon>Bartonellaceae</taxon>
        <taxon>Bartonella</taxon>
    </lineage>
</organism>
<accession>Q6G1K8</accession>
<keyword id="KW-0963">Cytoplasm</keyword>
<keyword id="KW-0342">GTP-binding</keyword>
<keyword id="KW-0378">Hydrolase</keyword>
<keyword id="KW-0460">Magnesium</keyword>
<keyword id="KW-0479">Metal-binding</keyword>
<keyword id="KW-0547">Nucleotide-binding</keyword>
<keyword id="KW-0630">Potassium</keyword>
<keyword id="KW-0819">tRNA processing</keyword>
<sequence>MDTIFAVSSGLLPSGVAVIRLSGSHVVHVVTTLCGCLPKARFMHYGNLTARDGSFLDSALTVFFPAPHSFTGEDCAEFHLHGGKAVVNRFLDELSTFKGCRIAEPGEFSRRAFMEGKLDLVQAEGLADLIEAETESQRRLAVMGTSGRLTTLYRDWRHKLMKIRAFIEAELDFSDEADIPNTVSDKVWKDVENLCISLREHIAEGERASILRDGFKIVIVGAPNSGKSSIMNRLAGKPVAIVTEEAGTTRDALEVRLVLGGLPVFLIDTAGFRETDNKIEQLGIEVAKQHVRDADLVILVYDMQNPKEVYLPETSAEIWRVGNKFDLYEENKEPWLIQFSALTGLNFDHFMKELESFCLRRVSEIGNLFPARKRQLQLLKEAVKEIENSVNYDSLDLSLRAEHLRRASDFLGKITGDIDVEDLLDIIFSEFCIGK</sequence>